<gene>
    <name evidence="1" type="primary">moaC</name>
    <name type="ordered locus">cgR_0290</name>
</gene>
<organism>
    <name type="scientific">Corynebacterium glutamicum (strain R)</name>
    <dbReference type="NCBI Taxonomy" id="340322"/>
    <lineage>
        <taxon>Bacteria</taxon>
        <taxon>Bacillati</taxon>
        <taxon>Actinomycetota</taxon>
        <taxon>Actinomycetes</taxon>
        <taxon>Mycobacteriales</taxon>
        <taxon>Corynebacteriaceae</taxon>
        <taxon>Corynebacterium</taxon>
    </lineage>
</organism>
<dbReference type="EC" id="4.6.1.17" evidence="1"/>
<dbReference type="EMBL" id="AP009044">
    <property type="protein sequence ID" value="BAF53254.1"/>
    <property type="molecule type" value="Genomic_DNA"/>
</dbReference>
<dbReference type="RefSeq" id="WP_003863410.1">
    <property type="nucleotide sequence ID" value="NC_009342.1"/>
</dbReference>
<dbReference type="SMR" id="A4QAK7"/>
<dbReference type="KEGG" id="cgt:cgR_0290"/>
<dbReference type="HOGENOM" id="CLU_074693_1_1_11"/>
<dbReference type="PhylomeDB" id="A4QAK7"/>
<dbReference type="UniPathway" id="UPA00344"/>
<dbReference type="Proteomes" id="UP000006698">
    <property type="component" value="Chromosome"/>
</dbReference>
<dbReference type="GO" id="GO:0061799">
    <property type="term" value="F:cyclic pyranopterin monophosphate synthase activity"/>
    <property type="evidence" value="ECO:0007669"/>
    <property type="project" value="UniProtKB-UniRule"/>
</dbReference>
<dbReference type="GO" id="GO:0006777">
    <property type="term" value="P:Mo-molybdopterin cofactor biosynthetic process"/>
    <property type="evidence" value="ECO:0007669"/>
    <property type="project" value="UniProtKB-UniRule"/>
</dbReference>
<dbReference type="CDD" id="cd01420">
    <property type="entry name" value="MoaC_PE"/>
    <property type="match status" value="1"/>
</dbReference>
<dbReference type="Gene3D" id="3.30.70.640">
    <property type="entry name" value="Molybdopterin cofactor biosynthesis C (MoaC) domain"/>
    <property type="match status" value="1"/>
</dbReference>
<dbReference type="HAMAP" id="MF_01224_B">
    <property type="entry name" value="MoaC_B"/>
    <property type="match status" value="1"/>
</dbReference>
<dbReference type="InterPro" id="IPR023045">
    <property type="entry name" value="MoaC"/>
</dbReference>
<dbReference type="InterPro" id="IPR047594">
    <property type="entry name" value="MoaC_bact/euk"/>
</dbReference>
<dbReference type="InterPro" id="IPR036522">
    <property type="entry name" value="MoaC_sf"/>
</dbReference>
<dbReference type="InterPro" id="IPR050105">
    <property type="entry name" value="MoCo_biosynth_MoaA/MoaC"/>
</dbReference>
<dbReference type="InterPro" id="IPR002820">
    <property type="entry name" value="Mopterin_CF_biosynth-C_dom"/>
</dbReference>
<dbReference type="NCBIfam" id="TIGR00581">
    <property type="entry name" value="moaC"/>
    <property type="match status" value="1"/>
</dbReference>
<dbReference type="NCBIfam" id="NF006870">
    <property type="entry name" value="PRK09364.1"/>
    <property type="match status" value="1"/>
</dbReference>
<dbReference type="PANTHER" id="PTHR22960">
    <property type="entry name" value="MOLYBDOPTERIN COFACTOR SYNTHESIS PROTEIN A"/>
    <property type="match status" value="1"/>
</dbReference>
<dbReference type="Pfam" id="PF01967">
    <property type="entry name" value="MoaC"/>
    <property type="match status" value="1"/>
</dbReference>
<dbReference type="SUPFAM" id="SSF55040">
    <property type="entry name" value="Molybdenum cofactor biosynthesis protein C, MoaC"/>
    <property type="match status" value="1"/>
</dbReference>
<protein>
    <recommendedName>
        <fullName evidence="1">Cyclic pyranopterin monophosphate synthase</fullName>
        <ecNumber evidence="1">4.6.1.17</ecNumber>
    </recommendedName>
    <alternativeName>
        <fullName evidence="1">Molybdenum cofactor biosynthesis protein C</fullName>
    </alternativeName>
</protein>
<reference key="1">
    <citation type="journal article" date="2007" name="Microbiology">
        <title>Comparative analysis of the Corynebacterium glutamicum group and complete genome sequence of strain R.</title>
        <authorList>
            <person name="Yukawa H."/>
            <person name="Omumasaba C.A."/>
            <person name="Nonaka H."/>
            <person name="Kos P."/>
            <person name="Okai N."/>
            <person name="Suzuki N."/>
            <person name="Suda M."/>
            <person name="Tsuge Y."/>
            <person name="Watanabe J."/>
            <person name="Ikeda Y."/>
            <person name="Vertes A.A."/>
            <person name="Inui M."/>
        </authorList>
    </citation>
    <scope>NUCLEOTIDE SEQUENCE [LARGE SCALE GENOMIC DNA]</scope>
    <source>
        <strain>R</strain>
    </source>
</reference>
<name>MOAC_CORGB</name>
<accession>A4QAK7</accession>
<sequence>MSKLTHVREDGSAHMVDVTGKNETSRTAVAEGFVKMRGDVVKQLFSAGLPKGDALPVARIAGIMGAKKTPDIIPLCHPLPLGKITVDFFELADGVRIEASVKTRGVTGVEMEALTAVSTAALTVYDMIKAVDKMAVIDGIRVLSKTGGKSGDWSVQ</sequence>
<keyword id="KW-0456">Lyase</keyword>
<keyword id="KW-0501">Molybdenum cofactor biosynthesis</keyword>
<comment type="function">
    <text evidence="1">Catalyzes the conversion of (8S)-3',8-cyclo-7,8-dihydroguanosine 5'-triphosphate to cyclic pyranopterin monophosphate (cPMP).</text>
</comment>
<comment type="catalytic activity">
    <reaction evidence="1">
        <text>(8S)-3',8-cyclo-7,8-dihydroguanosine 5'-triphosphate = cyclic pyranopterin phosphate + diphosphate</text>
        <dbReference type="Rhea" id="RHEA:49580"/>
        <dbReference type="ChEBI" id="CHEBI:33019"/>
        <dbReference type="ChEBI" id="CHEBI:59648"/>
        <dbReference type="ChEBI" id="CHEBI:131766"/>
        <dbReference type="EC" id="4.6.1.17"/>
    </reaction>
</comment>
<comment type="pathway">
    <text evidence="1">Cofactor biosynthesis; molybdopterin biosynthesis.</text>
</comment>
<comment type="subunit">
    <text evidence="1">Homohexamer; trimer of dimers.</text>
</comment>
<comment type="similarity">
    <text evidence="1">Belongs to the MoaC family.</text>
</comment>
<proteinExistence type="inferred from homology"/>
<feature type="chain" id="PRO_1000054089" description="Cyclic pyranopterin monophosphate synthase">
    <location>
        <begin position="1"/>
        <end position="156"/>
    </location>
</feature>
<feature type="active site" evidence="1">
    <location>
        <position position="126"/>
    </location>
</feature>
<feature type="binding site" evidence="1">
    <location>
        <begin position="75"/>
        <end position="77"/>
    </location>
    <ligand>
        <name>substrate</name>
    </ligand>
</feature>
<feature type="binding site" evidence="1">
    <location>
        <begin position="111"/>
        <end position="112"/>
    </location>
    <ligand>
        <name>substrate</name>
    </ligand>
</feature>
<evidence type="ECO:0000255" key="1">
    <source>
        <dbReference type="HAMAP-Rule" id="MF_01224"/>
    </source>
</evidence>